<keyword id="KW-0997">Cell inner membrane</keyword>
<keyword id="KW-1003">Cell membrane</keyword>
<keyword id="KW-0472">Membrane</keyword>
<keyword id="KW-1185">Reference proteome</keyword>
<keyword id="KW-0812">Transmembrane</keyword>
<keyword id="KW-1133">Transmembrane helix</keyword>
<keyword id="KW-0813">Transport</keyword>
<feature type="chain" id="PRO_0000331163" description="Spermidine export protein MdtJ">
    <location>
        <begin position="1"/>
        <end position="120"/>
    </location>
</feature>
<feature type="transmembrane region" description="Helical" evidence="1">
    <location>
        <begin position="1"/>
        <end position="21"/>
    </location>
</feature>
<feature type="transmembrane region" description="Helical" evidence="1">
    <location>
        <begin position="31"/>
        <end position="51"/>
    </location>
</feature>
<feature type="transmembrane region" description="Helical" evidence="1">
    <location>
        <begin position="54"/>
        <end position="74"/>
    </location>
</feature>
<feature type="transmembrane region" description="Helical" evidence="1">
    <location>
        <begin position="81"/>
        <end position="101"/>
    </location>
</feature>
<evidence type="ECO:0000255" key="1">
    <source>
        <dbReference type="HAMAP-Rule" id="MF_01598"/>
    </source>
</evidence>
<proteinExistence type="inferred from homology"/>
<accession>A8AGX5</accession>
<reference key="1">
    <citation type="submission" date="2007-08" db="EMBL/GenBank/DDBJ databases">
        <authorList>
            <consortium name="The Citrobacter koseri Genome Sequencing Project"/>
            <person name="McClelland M."/>
            <person name="Sanderson E.K."/>
            <person name="Porwollik S."/>
            <person name="Spieth J."/>
            <person name="Clifton W.S."/>
            <person name="Latreille P."/>
            <person name="Courtney L."/>
            <person name="Wang C."/>
            <person name="Pepin K."/>
            <person name="Bhonagiri V."/>
            <person name="Nash W."/>
            <person name="Johnson M."/>
            <person name="Thiruvilangam P."/>
            <person name="Wilson R."/>
        </authorList>
    </citation>
    <scope>NUCLEOTIDE SEQUENCE [LARGE SCALE GENOMIC DNA]</scope>
    <source>
        <strain>ATCC BAA-895 / CDC 4225-83 / SGSC4696</strain>
    </source>
</reference>
<name>MDTJ_CITK8</name>
<organism>
    <name type="scientific">Citrobacter koseri (strain ATCC BAA-895 / CDC 4225-83 / SGSC4696)</name>
    <dbReference type="NCBI Taxonomy" id="290338"/>
    <lineage>
        <taxon>Bacteria</taxon>
        <taxon>Pseudomonadati</taxon>
        <taxon>Pseudomonadota</taxon>
        <taxon>Gammaproteobacteria</taxon>
        <taxon>Enterobacterales</taxon>
        <taxon>Enterobacteriaceae</taxon>
        <taxon>Citrobacter</taxon>
    </lineage>
</organism>
<protein>
    <recommendedName>
        <fullName evidence="1">Spermidine export protein MdtJ</fullName>
    </recommendedName>
</protein>
<gene>
    <name evidence="1" type="primary">mdtJ</name>
    <name type="ordered locus">CKO_01606</name>
</gene>
<dbReference type="EMBL" id="CP000822">
    <property type="protein sequence ID" value="ABV12738.1"/>
    <property type="molecule type" value="Genomic_DNA"/>
</dbReference>
<dbReference type="RefSeq" id="WP_012132479.1">
    <property type="nucleotide sequence ID" value="NC_009792.1"/>
</dbReference>
<dbReference type="SMR" id="A8AGX5"/>
<dbReference type="STRING" id="290338.CKO_01606"/>
<dbReference type="GeneID" id="45135658"/>
<dbReference type="KEGG" id="cko:CKO_01606"/>
<dbReference type="HOGENOM" id="CLU_133067_0_0_6"/>
<dbReference type="OrthoDB" id="9808638at2"/>
<dbReference type="Proteomes" id="UP000008148">
    <property type="component" value="Chromosome"/>
</dbReference>
<dbReference type="GO" id="GO:0005886">
    <property type="term" value="C:plasma membrane"/>
    <property type="evidence" value="ECO:0007669"/>
    <property type="project" value="UniProtKB-SubCell"/>
</dbReference>
<dbReference type="GO" id="GO:0015199">
    <property type="term" value="F:amino-acid betaine transmembrane transporter activity"/>
    <property type="evidence" value="ECO:0007669"/>
    <property type="project" value="TreeGrafter"/>
</dbReference>
<dbReference type="GO" id="GO:0015297">
    <property type="term" value="F:antiporter activity"/>
    <property type="evidence" value="ECO:0007669"/>
    <property type="project" value="TreeGrafter"/>
</dbReference>
<dbReference type="GO" id="GO:0015220">
    <property type="term" value="F:choline transmembrane transporter activity"/>
    <property type="evidence" value="ECO:0007669"/>
    <property type="project" value="TreeGrafter"/>
</dbReference>
<dbReference type="GO" id="GO:0015606">
    <property type="term" value="F:spermidine transmembrane transporter activity"/>
    <property type="evidence" value="ECO:0007669"/>
    <property type="project" value="UniProtKB-UniRule"/>
</dbReference>
<dbReference type="GO" id="GO:0031460">
    <property type="term" value="P:glycine betaine transport"/>
    <property type="evidence" value="ECO:0007669"/>
    <property type="project" value="TreeGrafter"/>
</dbReference>
<dbReference type="FunFam" id="1.10.3730.20:FF:000001">
    <property type="entry name" value="Quaternary ammonium compound resistance transporter SugE"/>
    <property type="match status" value="1"/>
</dbReference>
<dbReference type="Gene3D" id="1.10.3730.20">
    <property type="match status" value="1"/>
</dbReference>
<dbReference type="HAMAP" id="MF_01598">
    <property type="entry name" value="MdtJ"/>
    <property type="match status" value="1"/>
</dbReference>
<dbReference type="InterPro" id="IPR000390">
    <property type="entry name" value="Small_drug/metabolite_transptr"/>
</dbReference>
<dbReference type="InterPro" id="IPR045324">
    <property type="entry name" value="Small_multidrug_res"/>
</dbReference>
<dbReference type="InterPro" id="IPR023740">
    <property type="entry name" value="Spermidine_export_MdtJ"/>
</dbReference>
<dbReference type="NCBIfam" id="NF007767">
    <property type="entry name" value="PRK10452.1"/>
    <property type="match status" value="1"/>
</dbReference>
<dbReference type="PANTHER" id="PTHR30561">
    <property type="entry name" value="SMR FAMILY PROTON-DEPENDENT DRUG EFFLUX TRANSPORTER SUGE"/>
    <property type="match status" value="1"/>
</dbReference>
<dbReference type="PANTHER" id="PTHR30561:SF2">
    <property type="entry name" value="SPERMIDINE EXPORT PROTEIN MDTJ"/>
    <property type="match status" value="1"/>
</dbReference>
<dbReference type="Pfam" id="PF00893">
    <property type="entry name" value="Multi_Drug_Res"/>
    <property type="match status" value="1"/>
</dbReference>
<dbReference type="SUPFAM" id="SSF103481">
    <property type="entry name" value="Multidrug resistance efflux transporter EmrE"/>
    <property type="match status" value="1"/>
</dbReference>
<sequence>MFYWILLALAIAAEITGTLSMKWASVSNGNTGFILMLVMITLSYIFLSFAVKKIALGVAYALWEGIGILFITLFSVLLFDEALSAMKIAGLVTLVFGIALIKSGTRKPVNAAKEATHAAV</sequence>
<comment type="function">
    <text evidence="1">Catalyzes the excretion of spermidine.</text>
</comment>
<comment type="subunit">
    <text evidence="1">Forms a complex with MdtI.</text>
</comment>
<comment type="subcellular location">
    <subcellularLocation>
        <location evidence="1">Cell inner membrane</location>
        <topology evidence="1">Multi-pass membrane protein</topology>
    </subcellularLocation>
</comment>
<comment type="similarity">
    <text evidence="1">Belongs to the drug/metabolite transporter (DMT) superfamily. Small multidrug resistance (SMR) (TC 2.A.7.1) family. MdtJ subfamily.</text>
</comment>